<gene>
    <name evidence="1" type="primary">tmcA</name>
    <name evidence="3" type="ORF">TAM4_2097</name>
</gene>
<evidence type="ECO:0000255" key="1">
    <source>
        <dbReference type="HAMAP-Rule" id="MF_01886"/>
    </source>
</evidence>
<evidence type="ECO:0000305" key="2">
    <source>
    </source>
</evidence>
<evidence type="ECO:0000312" key="3">
    <source>
        <dbReference type="EMBL" id="EEB73240.1"/>
    </source>
</evidence>
<sequence>MTVKVRFDKEVRDYAKGEKVKDSILKLTETALAQALENFHRRMIVIEGDTLRKAELAGILAGASARVLSGILEELMKKRLRDESEDKIEVLYATDALGEETFGRKRYEAFRKHFDVLAGSNVEVKAVTFKHTRDILGRTYDLLILDMSYDYSPNDLGRIIETVRGGGLIFILAHPFEKWKNMWTGFHKSLVTPPYTIDDVKKRFNRRLIRKFTEHDGIYIITEGGKARKKPKRSKSQARIKARKGVPIPEETLFPKELYEMALTEGQVEVLKAFEELVEGGMLVLTADRGRGKSVSVGIGAIGLALALKKRTRIVVTAPELENVQALFRFAKRALERLGFKPYVVEERGLIKELYARKIGLRYYPPADGYKKSADLYILDEAAGIHVPILHKYLNKERVVYSSTIHGYEGAGRGFSVKFLKRAREKREFKELHMDEPIRYAENDPIERWLFDVLLLDAEPVELTEEDFELIEKKEVYLEEPDLDDWFENDREDLRNFVGIYILAHYRNRPSDVALLADAPHHEARVLRLKNGKIVTAIQIAKEGGIPKKVIEKMAKGYKPRGNIIPDMMVKHHYLKEFAKLKGYRIVRIATHPDAMDRGLGSKALELLEKEAREKGLDWIGSGFGASEELVRFWVRNGFAVVHLSPARNPVSGEFTAIVLKPISERAKKLIKKANDEFRIRLTEWLGDTHRELEPEIARWLFETPFGEAVDYPVHLTEIQKKRLDAFTGKVLTYDTVVDAVKPIVKLYFLDGWMKPYLDERQIRLLIYRVLQAHSWEETAKLIDRTETFTMIEVRDIIRGLWYYYKRLLKA</sequence>
<organism>
    <name type="scientific">Thermococcus sp. (strain AM4)</name>
    <dbReference type="NCBI Taxonomy" id="246969"/>
    <lineage>
        <taxon>Archaea</taxon>
        <taxon>Methanobacteriati</taxon>
        <taxon>Methanobacteriota</taxon>
        <taxon>Thermococci</taxon>
        <taxon>Thermococcales</taxon>
        <taxon>Thermococcaceae</taxon>
        <taxon>Thermococcus</taxon>
    </lineage>
</organism>
<name>TMCA_THES3</name>
<reference evidence="3" key="1">
    <citation type="journal article" date="2011" name="J. Bacteriol.">
        <title>Complete Genome Sequence of the Hyperthermophilic Archaeon Thermococcus sp. Strain AM4, Capable of Organotrophic Growth and Growth at the Expense of Hydrogenogenic or Sulfidogenic Oxidation of Carbon Monoxide.</title>
        <authorList>
            <person name="Oger P."/>
            <person name="Sokolova T.G."/>
            <person name="Kozhevnikova D.A."/>
            <person name="Chernyh N.A."/>
            <person name="Bartlett D.H."/>
            <person name="Bonch-Osmolovskaya E.A."/>
            <person name="Lebedinsky A.V."/>
        </authorList>
    </citation>
    <scope>NUCLEOTIDE SEQUENCE [LARGE SCALE GENOMIC DNA]</scope>
    <source>
        <strain>AM4</strain>
    </source>
</reference>
<reference key="2">
    <citation type="journal article" date="2020" name="Nature">
        <title>Dynamic RNA acetylation revealed by quantitative cross-evolutionary mapping.</title>
        <authorList>
            <person name="Sas-Chen A."/>
            <person name="Thomas J.M."/>
            <person name="Matzov D."/>
            <person name="Taoka M."/>
            <person name="Nance K.D."/>
            <person name="Nir R."/>
            <person name="Bryson K.M."/>
            <person name="Shachar R."/>
            <person name="Liman G.L.S."/>
            <person name="Burkhart B.W."/>
            <person name="Gamage S.T."/>
            <person name="Nobe Y."/>
            <person name="Briney C.A."/>
            <person name="Levy M.J."/>
            <person name="Fuchs R.T."/>
            <person name="Robb G.B."/>
            <person name="Hartmann J."/>
            <person name="Sharma S."/>
            <person name="Lin Q."/>
            <person name="Florens L."/>
            <person name="Washburn M.P."/>
            <person name="Isobe T."/>
            <person name="Santangelo T.J."/>
            <person name="Shalev-Benami M."/>
            <person name="Meier J.L."/>
            <person name="Schwartz S."/>
        </authorList>
    </citation>
    <scope>FUNCTION</scope>
    <source>
        <strain>AM4</strain>
    </source>
</reference>
<accession>B7R4L8</accession>
<feature type="chain" id="PRO_0000461796" description="tRNA(Met) cytidine acetyltransferase TmcA">
    <location>
        <begin position="1"/>
        <end position="811"/>
    </location>
</feature>
<feature type="domain" description="N-acetyltransferase" evidence="1">
    <location>
        <begin position="473"/>
        <end position="662"/>
    </location>
</feature>
<feature type="binding site" evidence="1">
    <location>
        <position position="267"/>
    </location>
    <ligand>
        <name>ATP</name>
        <dbReference type="ChEBI" id="CHEBI:30616"/>
    </ligand>
</feature>
<feature type="binding site" evidence="1">
    <location>
        <position position="439"/>
    </location>
    <ligand>
        <name>ATP</name>
        <dbReference type="ChEBI" id="CHEBI:30616"/>
    </ligand>
</feature>
<feature type="binding site" evidence="1">
    <location>
        <begin position="589"/>
        <end position="591"/>
    </location>
    <ligand>
        <name>acetyl-CoA</name>
        <dbReference type="ChEBI" id="CHEBI:57288"/>
    </ligand>
</feature>
<feature type="binding site" evidence="1">
    <location>
        <position position="629"/>
    </location>
    <ligand>
        <name>acetyl-CoA</name>
        <dbReference type="ChEBI" id="CHEBI:57288"/>
    </ligand>
</feature>
<feature type="binding site" evidence="1">
    <location>
        <position position="636"/>
    </location>
    <ligand>
        <name>acetyl-CoA</name>
        <dbReference type="ChEBI" id="CHEBI:57288"/>
    </ligand>
</feature>
<comment type="function">
    <text evidence="1">Catalyzes the formation of N(4)-acetylcytidine (ac(4)C) at the wobble position of tRNA(Met), by using acetyl-CoA as an acetyl donor and ATP (or GTP).</text>
</comment>
<comment type="function">
    <text evidence="2">Catalyzes the formation of 267 N(4)-acetylcytidine (ac(4)C) sites in RNA, almost always on the middle C of a CCG motif. Modifications are found in rRNA, ncRNA, mRNA and tRNA. More acetylation is observed at 95 than at 75 or 85 degrees Celsius.</text>
</comment>
<comment type="catalytic activity">
    <reaction evidence="1">
        <text>cytidine(34) in elongator tRNA(Met) + acetyl-CoA + ATP + H2O = N(4)-acetylcytidine(34) in elongator tRNA(Met) + ADP + phosphate + CoA + H(+)</text>
        <dbReference type="Rhea" id="RHEA:43788"/>
        <dbReference type="Rhea" id="RHEA-COMP:10693"/>
        <dbReference type="Rhea" id="RHEA-COMP:10694"/>
        <dbReference type="ChEBI" id="CHEBI:15377"/>
        <dbReference type="ChEBI" id="CHEBI:15378"/>
        <dbReference type="ChEBI" id="CHEBI:30616"/>
        <dbReference type="ChEBI" id="CHEBI:43474"/>
        <dbReference type="ChEBI" id="CHEBI:57287"/>
        <dbReference type="ChEBI" id="CHEBI:57288"/>
        <dbReference type="ChEBI" id="CHEBI:74900"/>
        <dbReference type="ChEBI" id="CHEBI:82748"/>
        <dbReference type="ChEBI" id="CHEBI:456216"/>
        <dbReference type="EC" id="2.3.1.193"/>
    </reaction>
</comment>
<comment type="catalytic activity">
    <reaction evidence="1 2">
        <text>a cytidine in RNA + acetyl-CoA + ATP + H2O = an N(4)-acetylcytidine in RNA + ADP + phosphate + CoA + H(+)</text>
        <dbReference type="Rhea" id="RHEA:82211"/>
        <dbReference type="Rhea" id="RHEA-COMP:15704"/>
        <dbReference type="Rhea" id="RHEA-COMP:19834"/>
        <dbReference type="ChEBI" id="CHEBI:15377"/>
        <dbReference type="ChEBI" id="CHEBI:15378"/>
        <dbReference type="ChEBI" id="CHEBI:30616"/>
        <dbReference type="ChEBI" id="CHEBI:43474"/>
        <dbReference type="ChEBI" id="CHEBI:57287"/>
        <dbReference type="ChEBI" id="CHEBI:57288"/>
        <dbReference type="ChEBI" id="CHEBI:74900"/>
        <dbReference type="ChEBI" id="CHEBI:82748"/>
        <dbReference type="ChEBI" id="CHEBI:456216"/>
    </reaction>
</comment>
<comment type="catalytic activity">
    <reaction evidence="1 2">
        <text>a cytidine in tRNA + acetyl-CoA + ATP + H2O = an N(4)-acetylcytidine in tRNA + ADP + phosphate + CoA + H(+)</text>
        <dbReference type="Rhea" id="RHEA:53876"/>
        <dbReference type="Rhea" id="RHEA-COMP:13670"/>
        <dbReference type="Rhea" id="RHEA-COMP:13671"/>
        <dbReference type="ChEBI" id="CHEBI:15377"/>
        <dbReference type="ChEBI" id="CHEBI:15378"/>
        <dbReference type="ChEBI" id="CHEBI:30616"/>
        <dbReference type="ChEBI" id="CHEBI:43474"/>
        <dbReference type="ChEBI" id="CHEBI:57287"/>
        <dbReference type="ChEBI" id="CHEBI:57288"/>
        <dbReference type="ChEBI" id="CHEBI:74900"/>
        <dbReference type="ChEBI" id="CHEBI:82748"/>
        <dbReference type="ChEBI" id="CHEBI:456216"/>
    </reaction>
</comment>
<comment type="catalytic activity">
    <reaction evidence="1 2">
        <text>a cytidine in mRNA + acetyl-CoA + ATP + H2O = an N(4)-acetylcytidine in mRNA + ADP + phosphate + CoA + H(+)</text>
        <dbReference type="Rhea" id="RHEA:58480"/>
        <dbReference type="Rhea" id="RHEA-COMP:15145"/>
        <dbReference type="Rhea" id="RHEA-COMP:15146"/>
        <dbReference type="ChEBI" id="CHEBI:15377"/>
        <dbReference type="ChEBI" id="CHEBI:15378"/>
        <dbReference type="ChEBI" id="CHEBI:30616"/>
        <dbReference type="ChEBI" id="CHEBI:43474"/>
        <dbReference type="ChEBI" id="CHEBI:57287"/>
        <dbReference type="ChEBI" id="CHEBI:57288"/>
        <dbReference type="ChEBI" id="CHEBI:74900"/>
        <dbReference type="ChEBI" id="CHEBI:82748"/>
        <dbReference type="ChEBI" id="CHEBI:456216"/>
    </reaction>
</comment>
<comment type="subcellular location">
    <subcellularLocation>
        <location evidence="1">Cytoplasm</location>
    </subcellularLocation>
</comment>
<comment type="similarity">
    <text evidence="1">Belongs to the TmcA family.</text>
</comment>
<dbReference type="EC" id="2.3.1.193" evidence="1"/>
<dbReference type="EMBL" id="CP002952">
    <property type="protein sequence ID" value="EEB73240.1"/>
    <property type="molecule type" value="Genomic_DNA"/>
</dbReference>
<dbReference type="RefSeq" id="WP_014121860.1">
    <property type="nucleotide sequence ID" value="NC_016051.1"/>
</dbReference>
<dbReference type="STRING" id="246969.TAM4_2097"/>
<dbReference type="GeneID" id="7420013"/>
<dbReference type="KEGG" id="tha:TAM4_2097"/>
<dbReference type="eggNOG" id="arCOG01951">
    <property type="taxonomic scope" value="Archaea"/>
</dbReference>
<dbReference type="HOGENOM" id="CLU_004652_1_0_2"/>
<dbReference type="OrthoDB" id="312894at2157"/>
<dbReference type="Proteomes" id="UP000009277">
    <property type="component" value="Chromosome"/>
</dbReference>
<dbReference type="GO" id="GO:0005737">
    <property type="term" value="C:cytoplasm"/>
    <property type="evidence" value="ECO:0007669"/>
    <property type="project" value="UniProtKB-SubCell"/>
</dbReference>
<dbReference type="GO" id="GO:1990883">
    <property type="term" value="F:18S rRNA cytidine N-acetyltransferase activity"/>
    <property type="evidence" value="ECO:0007669"/>
    <property type="project" value="TreeGrafter"/>
</dbReference>
<dbReference type="GO" id="GO:0005524">
    <property type="term" value="F:ATP binding"/>
    <property type="evidence" value="ECO:0007669"/>
    <property type="project" value="UniProtKB-UniRule"/>
</dbReference>
<dbReference type="GO" id="GO:0106162">
    <property type="term" value="F:mRNA N-acetyltransferase activity"/>
    <property type="evidence" value="ECO:0007669"/>
    <property type="project" value="RHEA"/>
</dbReference>
<dbReference type="GO" id="GO:0019843">
    <property type="term" value="F:rRNA binding"/>
    <property type="evidence" value="ECO:0007669"/>
    <property type="project" value="UniProtKB-KW"/>
</dbReference>
<dbReference type="GO" id="GO:0000049">
    <property type="term" value="F:tRNA binding"/>
    <property type="evidence" value="ECO:0007669"/>
    <property type="project" value="UniProtKB-UniRule"/>
</dbReference>
<dbReference type="GO" id="GO:0051392">
    <property type="term" value="F:tRNA N4-acetyltransferase activity"/>
    <property type="evidence" value="ECO:0007669"/>
    <property type="project" value="UniProtKB-UniRule"/>
</dbReference>
<dbReference type="GO" id="GO:1904812">
    <property type="term" value="P:rRNA acetylation involved in maturation of SSU-rRNA"/>
    <property type="evidence" value="ECO:0007669"/>
    <property type="project" value="TreeGrafter"/>
</dbReference>
<dbReference type="GO" id="GO:0051391">
    <property type="term" value="P:tRNA acetylation"/>
    <property type="evidence" value="ECO:0007669"/>
    <property type="project" value="UniProtKB-UniRule"/>
</dbReference>
<dbReference type="GO" id="GO:0002101">
    <property type="term" value="P:tRNA wobble cytosine modification"/>
    <property type="evidence" value="ECO:0007669"/>
    <property type="project" value="UniProtKB-UniRule"/>
</dbReference>
<dbReference type="CDD" id="cd04301">
    <property type="entry name" value="NAT_SF"/>
    <property type="match status" value="1"/>
</dbReference>
<dbReference type="FunFam" id="3.40.50.300:FF:002218">
    <property type="entry name" value="tRNA(Met) cytidine acetyltransferase TmcA"/>
    <property type="match status" value="1"/>
</dbReference>
<dbReference type="FunFam" id="3.40.630.30:FF:000140">
    <property type="entry name" value="tRNA(Met) cytidine acetyltransferase TmcA"/>
    <property type="match status" value="1"/>
</dbReference>
<dbReference type="Gene3D" id="3.40.50.11040">
    <property type="match status" value="1"/>
</dbReference>
<dbReference type="Gene3D" id="3.40.630.30">
    <property type="match status" value="1"/>
</dbReference>
<dbReference type="Gene3D" id="3.40.50.300">
    <property type="entry name" value="P-loop containing nucleotide triphosphate hydrolases"/>
    <property type="match status" value="1"/>
</dbReference>
<dbReference type="HAMAP" id="MF_01886">
    <property type="entry name" value="tRNA_acetyltr_TmcA"/>
    <property type="match status" value="1"/>
</dbReference>
<dbReference type="InterPro" id="IPR016181">
    <property type="entry name" value="Acyl_CoA_acyltransferase"/>
</dbReference>
<dbReference type="InterPro" id="IPR000182">
    <property type="entry name" value="GNAT_dom"/>
</dbReference>
<dbReference type="InterPro" id="IPR007807">
    <property type="entry name" value="NAT10/TcmA_helicase"/>
</dbReference>
<dbReference type="InterPro" id="IPR027417">
    <property type="entry name" value="P-loop_NTPase"/>
</dbReference>
<dbReference type="InterPro" id="IPR032672">
    <property type="entry name" value="TmcA/NAT10/Kre33"/>
</dbReference>
<dbReference type="InterPro" id="IPR013562">
    <property type="entry name" value="TmcA_N"/>
</dbReference>
<dbReference type="InterPro" id="IPR024914">
    <property type="entry name" value="tRNA_acetyltr_TmcA"/>
</dbReference>
<dbReference type="PANTHER" id="PTHR10925">
    <property type="entry name" value="N-ACETYLTRANSFERASE 10"/>
    <property type="match status" value="1"/>
</dbReference>
<dbReference type="PANTHER" id="PTHR10925:SF5">
    <property type="entry name" value="RNA CYTIDINE ACETYLTRANSFERASE"/>
    <property type="match status" value="1"/>
</dbReference>
<dbReference type="Pfam" id="PF13718">
    <property type="entry name" value="GNAT_acetyltr_2"/>
    <property type="match status" value="2"/>
</dbReference>
<dbReference type="Pfam" id="PF05127">
    <property type="entry name" value="NAT10_TcmA_helicase"/>
    <property type="match status" value="1"/>
</dbReference>
<dbReference type="Pfam" id="PF08351">
    <property type="entry name" value="TmcA_N"/>
    <property type="match status" value="1"/>
</dbReference>
<dbReference type="SUPFAM" id="SSF55729">
    <property type="entry name" value="Acyl-CoA N-acyltransferases (Nat)"/>
    <property type="match status" value="1"/>
</dbReference>
<dbReference type="SUPFAM" id="SSF52540">
    <property type="entry name" value="P-loop containing nucleoside triphosphate hydrolases"/>
    <property type="match status" value="1"/>
</dbReference>
<dbReference type="PROSITE" id="PS51186">
    <property type="entry name" value="GNAT"/>
    <property type="match status" value="1"/>
</dbReference>
<keyword id="KW-0012">Acyltransferase</keyword>
<keyword id="KW-0067">ATP-binding</keyword>
<keyword id="KW-0963">Cytoplasm</keyword>
<keyword id="KW-0547">Nucleotide-binding</keyword>
<keyword id="KW-0694">RNA-binding</keyword>
<keyword id="KW-0698">rRNA processing</keyword>
<keyword id="KW-0699">rRNA-binding</keyword>
<keyword id="KW-0808">Transferase</keyword>
<keyword id="KW-0819">tRNA processing</keyword>
<keyword id="KW-0820">tRNA-binding</keyword>
<proteinExistence type="inferred from homology"/>
<protein>
    <recommendedName>
        <fullName evidence="1">tRNA(Met) cytidine acetyltransferase TmcA</fullName>
        <ecNumber evidence="1">2.3.1.193</ecNumber>
    </recommendedName>
</protein>